<reference key="1">
    <citation type="journal article" date="2009" name="PLoS Genet.">
        <title>Organised genome dynamics in the Escherichia coli species results in highly diverse adaptive paths.</title>
        <authorList>
            <person name="Touchon M."/>
            <person name="Hoede C."/>
            <person name="Tenaillon O."/>
            <person name="Barbe V."/>
            <person name="Baeriswyl S."/>
            <person name="Bidet P."/>
            <person name="Bingen E."/>
            <person name="Bonacorsi S."/>
            <person name="Bouchier C."/>
            <person name="Bouvet O."/>
            <person name="Calteau A."/>
            <person name="Chiapello H."/>
            <person name="Clermont O."/>
            <person name="Cruveiller S."/>
            <person name="Danchin A."/>
            <person name="Diard M."/>
            <person name="Dossat C."/>
            <person name="Karoui M.E."/>
            <person name="Frapy E."/>
            <person name="Garry L."/>
            <person name="Ghigo J.M."/>
            <person name="Gilles A.M."/>
            <person name="Johnson J."/>
            <person name="Le Bouguenec C."/>
            <person name="Lescat M."/>
            <person name="Mangenot S."/>
            <person name="Martinez-Jehanne V."/>
            <person name="Matic I."/>
            <person name="Nassif X."/>
            <person name="Oztas S."/>
            <person name="Petit M.A."/>
            <person name="Pichon C."/>
            <person name="Rouy Z."/>
            <person name="Ruf C.S."/>
            <person name="Schneider D."/>
            <person name="Tourret J."/>
            <person name="Vacherie B."/>
            <person name="Vallenet D."/>
            <person name="Medigue C."/>
            <person name="Rocha E.P.C."/>
            <person name="Denamur E."/>
        </authorList>
    </citation>
    <scope>NUCLEOTIDE SEQUENCE [LARGE SCALE GENOMIC DNA]</scope>
    <source>
        <strain>IAI39 / ExPEC</strain>
    </source>
</reference>
<comment type="function">
    <text evidence="1">Involved in the catabolism of oxalate and in the adapatation to low pH via the induction of the oxalate-dependent acid tolerance response (ATR). Catalyzes the transfer of the CoA moiety from formyl-CoA to oxalate (By similarity).</text>
</comment>
<comment type="catalytic activity">
    <reaction evidence="2">
        <text>formyl-CoA + oxalate = oxalyl-CoA + formate</text>
        <dbReference type="Rhea" id="RHEA:16545"/>
        <dbReference type="ChEBI" id="CHEBI:15740"/>
        <dbReference type="ChEBI" id="CHEBI:30623"/>
        <dbReference type="ChEBI" id="CHEBI:57376"/>
        <dbReference type="ChEBI" id="CHEBI:57388"/>
        <dbReference type="EC" id="2.8.3.16"/>
    </reaction>
</comment>
<comment type="pathway">
    <text evidence="2">Metabolic intermediate degradation; oxalate degradation; CO(2) and formate from oxalate: step 1/2.</text>
</comment>
<comment type="subunit">
    <text evidence="2">Homodimer.</text>
</comment>
<comment type="similarity">
    <text evidence="2">Belongs to the CoA-transferase III family. Frc subfamily.</text>
</comment>
<feature type="chain" id="PRO_1000133195" description="Formyl-CoA:oxalate CoA-transferase">
    <location>
        <begin position="1"/>
        <end position="416"/>
    </location>
</feature>
<feature type="active site" description="Nucleophile" evidence="2">
    <location>
        <position position="169"/>
    </location>
</feature>
<feature type="binding site" evidence="1">
    <location>
        <begin position="17"/>
        <end position="18"/>
    </location>
    <ligand>
        <name>CoA</name>
        <dbReference type="ChEBI" id="CHEBI:57287"/>
    </ligand>
</feature>
<feature type="binding site" evidence="2">
    <location>
        <position position="38"/>
    </location>
    <ligand>
        <name>CoA</name>
        <dbReference type="ChEBI" id="CHEBI:57287"/>
    </ligand>
</feature>
<feature type="binding site" evidence="1">
    <location>
        <begin position="72"/>
        <end position="75"/>
    </location>
    <ligand>
        <name>CoA</name>
        <dbReference type="ChEBI" id="CHEBI:57287"/>
    </ligand>
</feature>
<feature type="binding site" evidence="1">
    <location>
        <begin position="96"/>
        <end position="98"/>
    </location>
    <ligand>
        <name>CoA</name>
        <dbReference type="ChEBI" id="CHEBI:57287"/>
    </ligand>
</feature>
<feature type="binding site" evidence="2">
    <location>
        <position position="104"/>
    </location>
    <ligand>
        <name>CoA</name>
        <dbReference type="ChEBI" id="CHEBI:57287"/>
    </ligand>
</feature>
<feature type="binding site" evidence="1">
    <location>
        <begin position="137"/>
        <end position="140"/>
    </location>
    <ligand>
        <name>CoA</name>
        <dbReference type="ChEBI" id="CHEBI:57287"/>
    </ligand>
</feature>
<feature type="binding site" evidence="1">
    <location>
        <begin position="248"/>
        <end position="250"/>
    </location>
    <ligand>
        <name>substrate</name>
    </ligand>
</feature>
<feature type="binding site" evidence="1">
    <location>
        <begin position="273"/>
        <end position="275"/>
    </location>
    <ligand>
        <name>CoA</name>
        <dbReference type="ChEBI" id="CHEBI:57287"/>
    </ligand>
</feature>
<keyword id="KW-0808">Transferase</keyword>
<protein>
    <recommendedName>
        <fullName>Formyl-CoA:oxalate CoA-transferase</fullName>
        <shortName>FCOCT</shortName>
        <ecNumber evidence="2">2.8.3.16</ecNumber>
    </recommendedName>
    <alternativeName>
        <fullName evidence="2">Formyl-coenzyme A transferase</fullName>
        <shortName evidence="2">Formyl-CoA transferase</shortName>
    </alternativeName>
</protein>
<gene>
    <name evidence="2" type="primary">frc</name>
    <name type="ordered locus">ECIAI39_2517</name>
</gene>
<organism>
    <name type="scientific">Escherichia coli O7:K1 (strain IAI39 / ExPEC)</name>
    <dbReference type="NCBI Taxonomy" id="585057"/>
    <lineage>
        <taxon>Bacteria</taxon>
        <taxon>Pseudomonadati</taxon>
        <taxon>Pseudomonadota</taxon>
        <taxon>Gammaproteobacteria</taxon>
        <taxon>Enterobacterales</taxon>
        <taxon>Enterobacteriaceae</taxon>
        <taxon>Escherichia</taxon>
    </lineage>
</organism>
<accession>B7NPQ8</accession>
<name>FCTA_ECO7I</name>
<proteinExistence type="inferred from homology"/>
<evidence type="ECO:0000250" key="1"/>
<evidence type="ECO:0000255" key="2">
    <source>
        <dbReference type="HAMAP-Rule" id="MF_00742"/>
    </source>
</evidence>
<dbReference type="EC" id="2.8.3.16" evidence="2"/>
<dbReference type="EMBL" id="CU928164">
    <property type="protein sequence ID" value="CAR18641.1"/>
    <property type="molecule type" value="Genomic_DNA"/>
</dbReference>
<dbReference type="RefSeq" id="WP_000106759.1">
    <property type="nucleotide sequence ID" value="NC_011750.1"/>
</dbReference>
<dbReference type="RefSeq" id="YP_002408471.1">
    <property type="nucleotide sequence ID" value="NC_011750.1"/>
</dbReference>
<dbReference type="SMR" id="B7NPQ8"/>
<dbReference type="STRING" id="585057.ECIAI39_2517"/>
<dbReference type="GeneID" id="75202557"/>
<dbReference type="KEGG" id="ect:ECIAI39_2517"/>
<dbReference type="PATRIC" id="fig|585057.6.peg.2621"/>
<dbReference type="HOGENOM" id="CLU_033975_2_1_6"/>
<dbReference type="UniPathway" id="UPA00540">
    <property type="reaction ID" value="UER00598"/>
</dbReference>
<dbReference type="Proteomes" id="UP000000749">
    <property type="component" value="Chromosome"/>
</dbReference>
<dbReference type="GO" id="GO:0033608">
    <property type="term" value="F:formyl-CoA transferase activity"/>
    <property type="evidence" value="ECO:0007669"/>
    <property type="project" value="UniProtKB-EC"/>
</dbReference>
<dbReference type="GO" id="GO:0033611">
    <property type="term" value="P:oxalate catabolic process"/>
    <property type="evidence" value="ECO:0007669"/>
    <property type="project" value="UniProtKB-UniRule"/>
</dbReference>
<dbReference type="Gene3D" id="3.40.50.10540">
    <property type="entry name" value="Crotonobetainyl-coa:carnitine coa-transferase, domain 1"/>
    <property type="match status" value="1"/>
</dbReference>
<dbReference type="Gene3D" id="3.30.1540.10">
    <property type="entry name" value="formyl-coa transferase, domain 3"/>
    <property type="match status" value="1"/>
</dbReference>
<dbReference type="HAMAP" id="MF_00742">
    <property type="entry name" value="Formyl_CoA_transfer"/>
    <property type="match status" value="1"/>
</dbReference>
<dbReference type="InterPro" id="IPR050483">
    <property type="entry name" value="CoA-transferase_III_domain"/>
</dbReference>
<dbReference type="InterPro" id="IPR003673">
    <property type="entry name" value="CoA-Trfase_fam_III"/>
</dbReference>
<dbReference type="InterPro" id="IPR044855">
    <property type="entry name" value="CoA-Trfase_III_dom3_sf"/>
</dbReference>
<dbReference type="InterPro" id="IPR023606">
    <property type="entry name" value="CoA-Trfase_III_dom_1_sf"/>
</dbReference>
<dbReference type="InterPro" id="IPR017659">
    <property type="entry name" value="Formyl_CoA_transfer"/>
</dbReference>
<dbReference type="NCBIfam" id="TIGR03253">
    <property type="entry name" value="oxalate_frc"/>
    <property type="match status" value="1"/>
</dbReference>
<dbReference type="NCBIfam" id="NF003809">
    <property type="entry name" value="PRK05398.1"/>
    <property type="match status" value="1"/>
</dbReference>
<dbReference type="PANTHER" id="PTHR48207">
    <property type="entry name" value="SUCCINATE--HYDROXYMETHYLGLUTARATE COA-TRANSFERASE"/>
    <property type="match status" value="1"/>
</dbReference>
<dbReference type="PANTHER" id="PTHR48207:SF3">
    <property type="entry name" value="SUCCINATE--HYDROXYMETHYLGLUTARATE COA-TRANSFERASE"/>
    <property type="match status" value="1"/>
</dbReference>
<dbReference type="Pfam" id="PF02515">
    <property type="entry name" value="CoA_transf_3"/>
    <property type="match status" value="1"/>
</dbReference>
<dbReference type="SUPFAM" id="SSF89796">
    <property type="entry name" value="CoA-transferase family III (CaiB/BaiF)"/>
    <property type="match status" value="1"/>
</dbReference>
<sequence>MSTPLQGIKVLDFTGVQSGPSCTQMLAWFGADVIKIERPGVGDVTRHQLRDIPDIDALYFTMLNSNKRSIELNTKTAEGKEVMEKLIREADILVENFHPGAIDHMGFTWEHIQEINPRLIFGSIKGFDECSPYVNVKAYENVAQAAGGAASTTGFWDGPPLVSAAALGDSNTGMHLLIGLLAALLHREKTGRGQRVTMSMQDAVLNLCRVKLRDQQRLDKLGYLEEYPQYPNGTFGDAVPRGGNAGGGGQPGWILKCKGWETDPNAYIYFTIQEQNWENTCKAIGKPEWITDPAYSTAHARQPHIFDIFAEIEKYTVTIDKHEAVAYLTQFDIPCAPVLSMKEISLDPSLRQSGSVVEVEQPLRGKYLTVGCPMKFSAFTPDIKAAPLLGEHTAAVLQELGYSDDEIAAMKQNHAI</sequence>